<name>PYRG_BURA4</name>
<reference key="1">
    <citation type="submission" date="2008-04" db="EMBL/GenBank/DDBJ databases">
        <title>Complete sequence of chromosome 1 of Burkholderia ambifaria MC40-6.</title>
        <authorList>
            <person name="Copeland A."/>
            <person name="Lucas S."/>
            <person name="Lapidus A."/>
            <person name="Glavina del Rio T."/>
            <person name="Dalin E."/>
            <person name="Tice H."/>
            <person name="Pitluck S."/>
            <person name="Chain P."/>
            <person name="Malfatti S."/>
            <person name="Shin M."/>
            <person name="Vergez L."/>
            <person name="Lang D."/>
            <person name="Schmutz J."/>
            <person name="Larimer F."/>
            <person name="Land M."/>
            <person name="Hauser L."/>
            <person name="Kyrpides N."/>
            <person name="Lykidis A."/>
            <person name="Ramette A."/>
            <person name="Konstantinidis K."/>
            <person name="Tiedje J."/>
            <person name="Richardson P."/>
        </authorList>
    </citation>
    <scope>NUCLEOTIDE SEQUENCE [LARGE SCALE GENOMIC DNA]</scope>
    <source>
        <strain>MC40-6</strain>
    </source>
</reference>
<protein>
    <recommendedName>
        <fullName evidence="1">CTP synthase</fullName>
        <ecNumber evidence="1">6.3.4.2</ecNumber>
    </recommendedName>
    <alternativeName>
        <fullName evidence="1">Cytidine 5'-triphosphate synthase</fullName>
    </alternativeName>
    <alternativeName>
        <fullName evidence="1">Cytidine triphosphate synthetase</fullName>
        <shortName evidence="1">CTP synthetase</shortName>
        <shortName evidence="1">CTPS</shortName>
    </alternativeName>
    <alternativeName>
        <fullName evidence="1">UTP--ammonia ligase</fullName>
    </alternativeName>
</protein>
<sequence>MTKYVFVTGGVVSSLGKGIAAASLAAILESRGLKVTLLKLDPYINVDPGTMSPFQHGEVFVTEDGAETDLDLGHYERFISTKMRKANNFTTGQIYESVIRKERRGDYLGKTVQVIPHITNEIQAFIERGAASATCGEPDVAIVEIGGTVGDIESLPFLEAARQMSLRLGRNSACFVHLTLVPYVATAGELKTKPTQHSVQKLREIGILPHVLLCRADRRIPDDESKKISMFSNVPEDAVISVWDADSIYKIPQMLHDQGLDRIICEELKLSPKDADLSMWSELVEKLENPKHEVTIGMVGKYVDLTESYKSLIEALRHASLHTSTRVNIEYIDSEEIETNGVDSLKHLDAVLVPGGFGRRGTEGKIAAIRYARESKVPYLGICLGMQLAVIEFARDVVGLKQANSTEFDPETPERVVALITEWYDRDGKVETRTEESDLGGTMRLGSQRCPIKPGTMAEEIYGKDVNERHRHRYEVNNRFVPQLEAGGLIISARTPSEDLPEMMELPRSMHPWFVGVQFHPEFTSTPRDGHPLFKSFVEAALANKQARGVKA</sequence>
<feature type="chain" id="PRO_1000139396" description="CTP synthase">
    <location>
        <begin position="1"/>
        <end position="552"/>
    </location>
</feature>
<feature type="domain" description="Glutamine amidotransferase type-1" evidence="1">
    <location>
        <begin position="295"/>
        <end position="547"/>
    </location>
</feature>
<feature type="region of interest" description="Amidoligase domain" evidence="1">
    <location>
        <begin position="1"/>
        <end position="270"/>
    </location>
</feature>
<feature type="active site" description="Nucleophile; for glutamine hydrolysis" evidence="1">
    <location>
        <position position="383"/>
    </location>
</feature>
<feature type="active site" evidence="1">
    <location>
        <position position="520"/>
    </location>
</feature>
<feature type="active site" evidence="1">
    <location>
        <position position="522"/>
    </location>
</feature>
<feature type="binding site" evidence="1">
    <location>
        <position position="13"/>
    </location>
    <ligand>
        <name>CTP</name>
        <dbReference type="ChEBI" id="CHEBI:37563"/>
        <note>allosteric inhibitor</note>
    </ligand>
</feature>
<feature type="binding site" evidence="1">
    <location>
        <position position="13"/>
    </location>
    <ligand>
        <name>UTP</name>
        <dbReference type="ChEBI" id="CHEBI:46398"/>
    </ligand>
</feature>
<feature type="binding site" evidence="1">
    <location>
        <begin position="14"/>
        <end position="19"/>
    </location>
    <ligand>
        <name>ATP</name>
        <dbReference type="ChEBI" id="CHEBI:30616"/>
    </ligand>
</feature>
<feature type="binding site" evidence="1">
    <location>
        <position position="71"/>
    </location>
    <ligand>
        <name>ATP</name>
        <dbReference type="ChEBI" id="CHEBI:30616"/>
    </ligand>
</feature>
<feature type="binding site" evidence="1">
    <location>
        <position position="71"/>
    </location>
    <ligand>
        <name>Mg(2+)</name>
        <dbReference type="ChEBI" id="CHEBI:18420"/>
    </ligand>
</feature>
<feature type="binding site" evidence="1">
    <location>
        <position position="144"/>
    </location>
    <ligand>
        <name>Mg(2+)</name>
        <dbReference type="ChEBI" id="CHEBI:18420"/>
    </ligand>
</feature>
<feature type="binding site" evidence="1">
    <location>
        <begin position="151"/>
        <end position="153"/>
    </location>
    <ligand>
        <name>CTP</name>
        <dbReference type="ChEBI" id="CHEBI:37563"/>
        <note>allosteric inhibitor</note>
    </ligand>
</feature>
<feature type="binding site" evidence="1">
    <location>
        <begin position="191"/>
        <end position="196"/>
    </location>
    <ligand>
        <name>CTP</name>
        <dbReference type="ChEBI" id="CHEBI:37563"/>
        <note>allosteric inhibitor</note>
    </ligand>
</feature>
<feature type="binding site" evidence="1">
    <location>
        <begin position="191"/>
        <end position="196"/>
    </location>
    <ligand>
        <name>UTP</name>
        <dbReference type="ChEBI" id="CHEBI:46398"/>
    </ligand>
</feature>
<feature type="binding site" evidence="1">
    <location>
        <position position="227"/>
    </location>
    <ligand>
        <name>CTP</name>
        <dbReference type="ChEBI" id="CHEBI:37563"/>
        <note>allosteric inhibitor</note>
    </ligand>
</feature>
<feature type="binding site" evidence="1">
    <location>
        <position position="227"/>
    </location>
    <ligand>
        <name>UTP</name>
        <dbReference type="ChEBI" id="CHEBI:46398"/>
    </ligand>
</feature>
<feature type="binding site" evidence="1">
    <location>
        <position position="356"/>
    </location>
    <ligand>
        <name>L-glutamine</name>
        <dbReference type="ChEBI" id="CHEBI:58359"/>
    </ligand>
</feature>
<feature type="binding site" evidence="1">
    <location>
        <begin position="384"/>
        <end position="387"/>
    </location>
    <ligand>
        <name>L-glutamine</name>
        <dbReference type="ChEBI" id="CHEBI:58359"/>
    </ligand>
</feature>
<feature type="binding site" evidence="1">
    <location>
        <position position="407"/>
    </location>
    <ligand>
        <name>L-glutamine</name>
        <dbReference type="ChEBI" id="CHEBI:58359"/>
    </ligand>
</feature>
<feature type="binding site" evidence="1">
    <location>
        <position position="473"/>
    </location>
    <ligand>
        <name>L-glutamine</name>
        <dbReference type="ChEBI" id="CHEBI:58359"/>
    </ligand>
</feature>
<organism>
    <name type="scientific">Burkholderia ambifaria (strain MC40-6)</name>
    <dbReference type="NCBI Taxonomy" id="398577"/>
    <lineage>
        <taxon>Bacteria</taxon>
        <taxon>Pseudomonadati</taxon>
        <taxon>Pseudomonadota</taxon>
        <taxon>Betaproteobacteria</taxon>
        <taxon>Burkholderiales</taxon>
        <taxon>Burkholderiaceae</taxon>
        <taxon>Burkholderia</taxon>
        <taxon>Burkholderia cepacia complex</taxon>
    </lineage>
</organism>
<keyword id="KW-0067">ATP-binding</keyword>
<keyword id="KW-0315">Glutamine amidotransferase</keyword>
<keyword id="KW-0436">Ligase</keyword>
<keyword id="KW-0460">Magnesium</keyword>
<keyword id="KW-0479">Metal-binding</keyword>
<keyword id="KW-0547">Nucleotide-binding</keyword>
<keyword id="KW-0665">Pyrimidine biosynthesis</keyword>
<gene>
    <name evidence="1" type="primary">pyrG</name>
    <name type="ordered locus">BamMC406_2019</name>
</gene>
<dbReference type="EC" id="6.3.4.2" evidence="1"/>
<dbReference type="EMBL" id="CP001025">
    <property type="protein sequence ID" value="ACB64500.1"/>
    <property type="molecule type" value="Genomic_DNA"/>
</dbReference>
<dbReference type="RefSeq" id="WP_012364210.1">
    <property type="nucleotide sequence ID" value="NC_010551.1"/>
</dbReference>
<dbReference type="SMR" id="B1YT11"/>
<dbReference type="MEROPS" id="C26.964"/>
<dbReference type="KEGG" id="bac:BamMC406_2019"/>
<dbReference type="HOGENOM" id="CLU_011675_5_0_4"/>
<dbReference type="OrthoDB" id="9801107at2"/>
<dbReference type="UniPathway" id="UPA00159">
    <property type="reaction ID" value="UER00277"/>
</dbReference>
<dbReference type="Proteomes" id="UP000001680">
    <property type="component" value="Chromosome 1"/>
</dbReference>
<dbReference type="GO" id="GO:0005829">
    <property type="term" value="C:cytosol"/>
    <property type="evidence" value="ECO:0007669"/>
    <property type="project" value="TreeGrafter"/>
</dbReference>
<dbReference type="GO" id="GO:0005524">
    <property type="term" value="F:ATP binding"/>
    <property type="evidence" value="ECO:0007669"/>
    <property type="project" value="UniProtKB-KW"/>
</dbReference>
<dbReference type="GO" id="GO:0003883">
    <property type="term" value="F:CTP synthase activity"/>
    <property type="evidence" value="ECO:0007669"/>
    <property type="project" value="UniProtKB-UniRule"/>
</dbReference>
<dbReference type="GO" id="GO:0004359">
    <property type="term" value="F:glutaminase activity"/>
    <property type="evidence" value="ECO:0007669"/>
    <property type="project" value="RHEA"/>
</dbReference>
<dbReference type="GO" id="GO:0042802">
    <property type="term" value="F:identical protein binding"/>
    <property type="evidence" value="ECO:0007669"/>
    <property type="project" value="TreeGrafter"/>
</dbReference>
<dbReference type="GO" id="GO:0046872">
    <property type="term" value="F:metal ion binding"/>
    <property type="evidence" value="ECO:0007669"/>
    <property type="project" value="UniProtKB-KW"/>
</dbReference>
<dbReference type="GO" id="GO:0044210">
    <property type="term" value="P:'de novo' CTP biosynthetic process"/>
    <property type="evidence" value="ECO:0007669"/>
    <property type="project" value="UniProtKB-UniRule"/>
</dbReference>
<dbReference type="GO" id="GO:0019856">
    <property type="term" value="P:pyrimidine nucleobase biosynthetic process"/>
    <property type="evidence" value="ECO:0007669"/>
    <property type="project" value="TreeGrafter"/>
</dbReference>
<dbReference type="CDD" id="cd03113">
    <property type="entry name" value="CTPS_N"/>
    <property type="match status" value="1"/>
</dbReference>
<dbReference type="CDD" id="cd01746">
    <property type="entry name" value="GATase1_CTP_Synthase"/>
    <property type="match status" value="1"/>
</dbReference>
<dbReference type="FunFam" id="3.40.50.300:FF:000009">
    <property type="entry name" value="CTP synthase"/>
    <property type="match status" value="1"/>
</dbReference>
<dbReference type="FunFam" id="3.40.50.880:FF:000002">
    <property type="entry name" value="CTP synthase"/>
    <property type="match status" value="1"/>
</dbReference>
<dbReference type="Gene3D" id="3.40.50.880">
    <property type="match status" value="1"/>
</dbReference>
<dbReference type="Gene3D" id="3.40.50.300">
    <property type="entry name" value="P-loop containing nucleotide triphosphate hydrolases"/>
    <property type="match status" value="1"/>
</dbReference>
<dbReference type="HAMAP" id="MF_01227">
    <property type="entry name" value="PyrG"/>
    <property type="match status" value="1"/>
</dbReference>
<dbReference type="InterPro" id="IPR029062">
    <property type="entry name" value="Class_I_gatase-like"/>
</dbReference>
<dbReference type="InterPro" id="IPR004468">
    <property type="entry name" value="CTP_synthase"/>
</dbReference>
<dbReference type="InterPro" id="IPR017456">
    <property type="entry name" value="CTP_synthase_N"/>
</dbReference>
<dbReference type="InterPro" id="IPR017926">
    <property type="entry name" value="GATASE"/>
</dbReference>
<dbReference type="InterPro" id="IPR033828">
    <property type="entry name" value="GATase1_CTP_Synthase"/>
</dbReference>
<dbReference type="InterPro" id="IPR027417">
    <property type="entry name" value="P-loop_NTPase"/>
</dbReference>
<dbReference type="NCBIfam" id="NF003792">
    <property type="entry name" value="PRK05380.1"/>
    <property type="match status" value="1"/>
</dbReference>
<dbReference type="NCBIfam" id="TIGR00337">
    <property type="entry name" value="PyrG"/>
    <property type="match status" value="1"/>
</dbReference>
<dbReference type="PANTHER" id="PTHR11550">
    <property type="entry name" value="CTP SYNTHASE"/>
    <property type="match status" value="1"/>
</dbReference>
<dbReference type="PANTHER" id="PTHR11550:SF0">
    <property type="entry name" value="CTP SYNTHASE-RELATED"/>
    <property type="match status" value="1"/>
</dbReference>
<dbReference type="Pfam" id="PF06418">
    <property type="entry name" value="CTP_synth_N"/>
    <property type="match status" value="1"/>
</dbReference>
<dbReference type="Pfam" id="PF00117">
    <property type="entry name" value="GATase"/>
    <property type="match status" value="1"/>
</dbReference>
<dbReference type="SUPFAM" id="SSF52317">
    <property type="entry name" value="Class I glutamine amidotransferase-like"/>
    <property type="match status" value="1"/>
</dbReference>
<dbReference type="SUPFAM" id="SSF52540">
    <property type="entry name" value="P-loop containing nucleoside triphosphate hydrolases"/>
    <property type="match status" value="1"/>
</dbReference>
<dbReference type="PROSITE" id="PS51273">
    <property type="entry name" value="GATASE_TYPE_1"/>
    <property type="match status" value="1"/>
</dbReference>
<accession>B1YT11</accession>
<evidence type="ECO:0000255" key="1">
    <source>
        <dbReference type="HAMAP-Rule" id="MF_01227"/>
    </source>
</evidence>
<proteinExistence type="inferred from homology"/>
<comment type="function">
    <text evidence="1">Catalyzes the ATP-dependent amination of UTP to CTP with either L-glutamine or ammonia as the source of nitrogen. Regulates intracellular CTP levels through interactions with the four ribonucleotide triphosphates.</text>
</comment>
<comment type="catalytic activity">
    <reaction evidence="1">
        <text>UTP + L-glutamine + ATP + H2O = CTP + L-glutamate + ADP + phosphate + 2 H(+)</text>
        <dbReference type="Rhea" id="RHEA:26426"/>
        <dbReference type="ChEBI" id="CHEBI:15377"/>
        <dbReference type="ChEBI" id="CHEBI:15378"/>
        <dbReference type="ChEBI" id="CHEBI:29985"/>
        <dbReference type="ChEBI" id="CHEBI:30616"/>
        <dbReference type="ChEBI" id="CHEBI:37563"/>
        <dbReference type="ChEBI" id="CHEBI:43474"/>
        <dbReference type="ChEBI" id="CHEBI:46398"/>
        <dbReference type="ChEBI" id="CHEBI:58359"/>
        <dbReference type="ChEBI" id="CHEBI:456216"/>
        <dbReference type="EC" id="6.3.4.2"/>
    </reaction>
</comment>
<comment type="catalytic activity">
    <reaction evidence="1">
        <text>L-glutamine + H2O = L-glutamate + NH4(+)</text>
        <dbReference type="Rhea" id="RHEA:15889"/>
        <dbReference type="ChEBI" id="CHEBI:15377"/>
        <dbReference type="ChEBI" id="CHEBI:28938"/>
        <dbReference type="ChEBI" id="CHEBI:29985"/>
        <dbReference type="ChEBI" id="CHEBI:58359"/>
    </reaction>
</comment>
<comment type="catalytic activity">
    <reaction evidence="1">
        <text>UTP + NH4(+) + ATP = CTP + ADP + phosphate + 2 H(+)</text>
        <dbReference type="Rhea" id="RHEA:16597"/>
        <dbReference type="ChEBI" id="CHEBI:15378"/>
        <dbReference type="ChEBI" id="CHEBI:28938"/>
        <dbReference type="ChEBI" id="CHEBI:30616"/>
        <dbReference type="ChEBI" id="CHEBI:37563"/>
        <dbReference type="ChEBI" id="CHEBI:43474"/>
        <dbReference type="ChEBI" id="CHEBI:46398"/>
        <dbReference type="ChEBI" id="CHEBI:456216"/>
    </reaction>
</comment>
<comment type="activity regulation">
    <text evidence="1">Allosterically activated by GTP, when glutamine is the substrate; GTP has no effect on the reaction when ammonia is the substrate. The allosteric effector GTP functions by stabilizing the protein conformation that binds the tetrahedral intermediate(s) formed during glutamine hydrolysis. Inhibited by the product CTP, via allosteric rather than competitive inhibition.</text>
</comment>
<comment type="pathway">
    <text evidence="1">Pyrimidine metabolism; CTP biosynthesis via de novo pathway; CTP from UDP: step 2/2.</text>
</comment>
<comment type="subunit">
    <text evidence="1">Homotetramer.</text>
</comment>
<comment type="miscellaneous">
    <text evidence="1">CTPSs have evolved a hybrid strategy for distinguishing between UTP and CTP. The overlapping regions of the product feedback inhibitory and substrate sites recognize a common feature in both compounds, the triphosphate moiety. To differentiate isosteric substrate and product pyrimidine rings, an additional pocket far from the expected kinase/ligase catalytic site, specifically recognizes the cytosine and ribose portions of the product inhibitor.</text>
</comment>
<comment type="similarity">
    <text evidence="1">Belongs to the CTP synthase family.</text>
</comment>